<feature type="chain" id="PRO_0000060371" description="tRNA (guanine-N(1)-)-methyltransferase">
    <location>
        <begin position="1"/>
        <end position="235"/>
    </location>
</feature>
<feature type="binding site" evidence="1">
    <location>
        <position position="114"/>
    </location>
    <ligand>
        <name>S-adenosyl-L-methionine</name>
        <dbReference type="ChEBI" id="CHEBI:59789"/>
    </ligand>
</feature>
<feature type="binding site" evidence="1">
    <location>
        <begin position="134"/>
        <end position="139"/>
    </location>
    <ligand>
        <name>S-adenosyl-L-methionine</name>
        <dbReference type="ChEBI" id="CHEBI:59789"/>
    </ligand>
</feature>
<reference key="1">
    <citation type="journal article" date="2006" name="J. Bacteriol.">
        <title>Comparative genomic analysis of three strains of Ehrlichia ruminantium reveals an active process of genome size plasticity.</title>
        <authorList>
            <person name="Frutos R."/>
            <person name="Viari A."/>
            <person name="Ferraz C."/>
            <person name="Morgat A."/>
            <person name="Eychenie S."/>
            <person name="Kandassamy Y."/>
            <person name="Chantal I."/>
            <person name="Bensaid A."/>
            <person name="Coissac E."/>
            <person name="Vachiery N."/>
            <person name="Demaille J."/>
            <person name="Martinez D."/>
        </authorList>
    </citation>
    <scope>NUCLEOTIDE SEQUENCE [LARGE SCALE GENOMIC DNA]</scope>
    <source>
        <strain>Gardel</strain>
    </source>
</reference>
<dbReference type="EC" id="2.1.1.228" evidence="1"/>
<dbReference type="EMBL" id="CR925677">
    <property type="protein sequence ID" value="CAI28380.1"/>
    <property type="molecule type" value="Genomic_DNA"/>
</dbReference>
<dbReference type="RefSeq" id="WP_011255972.1">
    <property type="nucleotide sequence ID" value="NC_006831.1"/>
</dbReference>
<dbReference type="SMR" id="Q5FGP5"/>
<dbReference type="KEGG" id="erg:ERGA_CDS_09280"/>
<dbReference type="HOGENOM" id="CLU_047363_0_1_5"/>
<dbReference type="OrthoDB" id="9807416at2"/>
<dbReference type="Proteomes" id="UP000000533">
    <property type="component" value="Chromosome"/>
</dbReference>
<dbReference type="GO" id="GO:0005829">
    <property type="term" value="C:cytosol"/>
    <property type="evidence" value="ECO:0007669"/>
    <property type="project" value="TreeGrafter"/>
</dbReference>
<dbReference type="GO" id="GO:0052906">
    <property type="term" value="F:tRNA (guanine(37)-N1)-methyltransferase activity"/>
    <property type="evidence" value="ECO:0007669"/>
    <property type="project" value="UniProtKB-UniRule"/>
</dbReference>
<dbReference type="GO" id="GO:0002939">
    <property type="term" value="P:tRNA N1-guanine methylation"/>
    <property type="evidence" value="ECO:0007669"/>
    <property type="project" value="TreeGrafter"/>
</dbReference>
<dbReference type="CDD" id="cd18080">
    <property type="entry name" value="TrmD-like"/>
    <property type="match status" value="1"/>
</dbReference>
<dbReference type="FunFam" id="3.40.1280.10:FF:000001">
    <property type="entry name" value="tRNA (guanine-N(1)-)-methyltransferase"/>
    <property type="match status" value="1"/>
</dbReference>
<dbReference type="Gene3D" id="3.40.1280.10">
    <property type="match status" value="1"/>
</dbReference>
<dbReference type="Gene3D" id="1.10.1270.20">
    <property type="entry name" value="tRNA(m1g37)methyltransferase, domain 2"/>
    <property type="match status" value="1"/>
</dbReference>
<dbReference type="HAMAP" id="MF_00605">
    <property type="entry name" value="TrmD"/>
    <property type="match status" value="1"/>
</dbReference>
<dbReference type="InterPro" id="IPR029028">
    <property type="entry name" value="Alpha/beta_knot_MTases"/>
</dbReference>
<dbReference type="InterPro" id="IPR023148">
    <property type="entry name" value="tRNA_m1G_MeTrfase_C_sf"/>
</dbReference>
<dbReference type="InterPro" id="IPR002649">
    <property type="entry name" value="tRNA_m1G_MeTrfase_TrmD"/>
</dbReference>
<dbReference type="InterPro" id="IPR029026">
    <property type="entry name" value="tRNA_m1G_MTases_N"/>
</dbReference>
<dbReference type="InterPro" id="IPR016009">
    <property type="entry name" value="tRNA_MeTrfase_TRMD/TRM10"/>
</dbReference>
<dbReference type="NCBIfam" id="NF000648">
    <property type="entry name" value="PRK00026.1"/>
    <property type="match status" value="1"/>
</dbReference>
<dbReference type="NCBIfam" id="TIGR00088">
    <property type="entry name" value="trmD"/>
    <property type="match status" value="1"/>
</dbReference>
<dbReference type="PANTHER" id="PTHR46417">
    <property type="entry name" value="TRNA (GUANINE-N(1)-)-METHYLTRANSFERASE"/>
    <property type="match status" value="1"/>
</dbReference>
<dbReference type="PANTHER" id="PTHR46417:SF1">
    <property type="entry name" value="TRNA (GUANINE-N(1)-)-METHYLTRANSFERASE"/>
    <property type="match status" value="1"/>
</dbReference>
<dbReference type="Pfam" id="PF01746">
    <property type="entry name" value="tRNA_m1G_MT"/>
    <property type="match status" value="1"/>
</dbReference>
<dbReference type="PIRSF" id="PIRSF000386">
    <property type="entry name" value="tRNA_mtase"/>
    <property type="match status" value="1"/>
</dbReference>
<dbReference type="SUPFAM" id="SSF75217">
    <property type="entry name" value="alpha/beta knot"/>
    <property type="match status" value="1"/>
</dbReference>
<organism>
    <name type="scientific">Ehrlichia ruminantium (strain Gardel)</name>
    <dbReference type="NCBI Taxonomy" id="302409"/>
    <lineage>
        <taxon>Bacteria</taxon>
        <taxon>Pseudomonadati</taxon>
        <taxon>Pseudomonadota</taxon>
        <taxon>Alphaproteobacteria</taxon>
        <taxon>Rickettsiales</taxon>
        <taxon>Anaplasmataceae</taxon>
        <taxon>Ehrlichia</taxon>
    </lineage>
</organism>
<name>TRMD_EHRRG</name>
<sequence>MVFNVNILTIFPEMFPGTLGYSVIGKALNKGIWNLNVIDIRSFATDKHKTVDDKPYGGGPGMIMKADVIGSAIDNVLSTNKETKLIYMSPSGVKLNQDISGQLAHFSNITILCGRFEGIDRRVLDFYDFYEISIGDYILSGGEVASMVLIETCVRLIPGVVSNVDSIRDESFTASYGLEYSQYTRPASWRGLEVPSVLVSGNHKKINLWKTQQSYRITKQRRPELTNTADGDIYE</sequence>
<protein>
    <recommendedName>
        <fullName evidence="1">tRNA (guanine-N(1)-)-methyltransferase</fullName>
        <ecNumber evidence="1">2.1.1.228</ecNumber>
    </recommendedName>
    <alternativeName>
        <fullName evidence="1">M1G-methyltransferase</fullName>
    </alternativeName>
    <alternativeName>
        <fullName evidence="1">tRNA [GM37] methyltransferase</fullName>
    </alternativeName>
</protein>
<comment type="function">
    <text evidence="1">Specifically methylates guanosine-37 in various tRNAs.</text>
</comment>
<comment type="catalytic activity">
    <reaction evidence="1">
        <text>guanosine(37) in tRNA + S-adenosyl-L-methionine = N(1)-methylguanosine(37) in tRNA + S-adenosyl-L-homocysteine + H(+)</text>
        <dbReference type="Rhea" id="RHEA:36899"/>
        <dbReference type="Rhea" id="RHEA-COMP:10145"/>
        <dbReference type="Rhea" id="RHEA-COMP:10147"/>
        <dbReference type="ChEBI" id="CHEBI:15378"/>
        <dbReference type="ChEBI" id="CHEBI:57856"/>
        <dbReference type="ChEBI" id="CHEBI:59789"/>
        <dbReference type="ChEBI" id="CHEBI:73542"/>
        <dbReference type="ChEBI" id="CHEBI:74269"/>
        <dbReference type="EC" id="2.1.1.228"/>
    </reaction>
</comment>
<comment type="subunit">
    <text evidence="1">Homodimer.</text>
</comment>
<comment type="subcellular location">
    <subcellularLocation>
        <location evidence="1">Cytoplasm</location>
    </subcellularLocation>
</comment>
<comment type="similarity">
    <text evidence="1">Belongs to the RNA methyltransferase TrmD family.</text>
</comment>
<evidence type="ECO:0000255" key="1">
    <source>
        <dbReference type="HAMAP-Rule" id="MF_00605"/>
    </source>
</evidence>
<gene>
    <name evidence="1" type="primary">trmD</name>
    <name type="ordered locus">ERGA_CDS_09280</name>
</gene>
<accession>Q5FGP5</accession>
<proteinExistence type="inferred from homology"/>
<keyword id="KW-0963">Cytoplasm</keyword>
<keyword id="KW-0489">Methyltransferase</keyword>
<keyword id="KW-0949">S-adenosyl-L-methionine</keyword>
<keyword id="KW-0808">Transferase</keyword>
<keyword id="KW-0819">tRNA processing</keyword>